<evidence type="ECO:0000255" key="1">
    <source>
        <dbReference type="HAMAP-Rule" id="MF_00360"/>
    </source>
</evidence>
<evidence type="ECO:0000256" key="2">
    <source>
        <dbReference type="SAM" id="MobiDB-lite"/>
    </source>
</evidence>
<evidence type="ECO:0000305" key="3"/>
<keyword id="KW-0007">Acetylation</keyword>
<keyword id="KW-0687">Ribonucleoprotein</keyword>
<keyword id="KW-0689">Ribosomal protein</keyword>
<keyword id="KW-0694">RNA-binding</keyword>
<keyword id="KW-0699">rRNA-binding</keyword>
<dbReference type="EMBL" id="CP000946">
    <property type="protein sequence ID" value="ACA79417.1"/>
    <property type="molecule type" value="Genomic_DNA"/>
</dbReference>
<dbReference type="RefSeq" id="WP_001216676.1">
    <property type="nucleotide sequence ID" value="NZ_MTFT01000012.1"/>
</dbReference>
<dbReference type="SMR" id="B1IT06"/>
<dbReference type="GeneID" id="93777623"/>
<dbReference type="KEGG" id="ecl:EcolC_3813"/>
<dbReference type="HOGENOM" id="CLU_113441_6_1_6"/>
<dbReference type="GO" id="GO:0022627">
    <property type="term" value="C:cytosolic small ribosomal subunit"/>
    <property type="evidence" value="ECO:0007669"/>
    <property type="project" value="TreeGrafter"/>
</dbReference>
<dbReference type="GO" id="GO:0070181">
    <property type="term" value="F:small ribosomal subunit rRNA binding"/>
    <property type="evidence" value="ECO:0007669"/>
    <property type="project" value="TreeGrafter"/>
</dbReference>
<dbReference type="GO" id="GO:0003735">
    <property type="term" value="F:structural constituent of ribosome"/>
    <property type="evidence" value="ECO:0007669"/>
    <property type="project" value="InterPro"/>
</dbReference>
<dbReference type="GO" id="GO:0006412">
    <property type="term" value="P:translation"/>
    <property type="evidence" value="ECO:0007669"/>
    <property type="project" value="UniProtKB-UniRule"/>
</dbReference>
<dbReference type="CDD" id="cd00473">
    <property type="entry name" value="bS6"/>
    <property type="match status" value="1"/>
</dbReference>
<dbReference type="FunFam" id="3.30.70.60:FF:000003">
    <property type="entry name" value="30S ribosomal protein S6"/>
    <property type="match status" value="1"/>
</dbReference>
<dbReference type="Gene3D" id="3.30.70.60">
    <property type="match status" value="1"/>
</dbReference>
<dbReference type="HAMAP" id="MF_00360">
    <property type="entry name" value="Ribosomal_bS6"/>
    <property type="match status" value="1"/>
</dbReference>
<dbReference type="InterPro" id="IPR000529">
    <property type="entry name" value="Ribosomal_bS6"/>
</dbReference>
<dbReference type="InterPro" id="IPR020815">
    <property type="entry name" value="Ribosomal_bS6_CS"/>
</dbReference>
<dbReference type="InterPro" id="IPR035980">
    <property type="entry name" value="Ribosomal_bS6_sf"/>
</dbReference>
<dbReference type="InterPro" id="IPR020814">
    <property type="entry name" value="Ribosomal_S6_plastid/chlpt"/>
</dbReference>
<dbReference type="InterPro" id="IPR014717">
    <property type="entry name" value="Transl_elong_EF1B/ribsomal_bS6"/>
</dbReference>
<dbReference type="NCBIfam" id="TIGR00166">
    <property type="entry name" value="S6"/>
    <property type="match status" value="1"/>
</dbReference>
<dbReference type="PANTHER" id="PTHR21011">
    <property type="entry name" value="MITOCHONDRIAL 28S RIBOSOMAL PROTEIN S6"/>
    <property type="match status" value="1"/>
</dbReference>
<dbReference type="PANTHER" id="PTHR21011:SF1">
    <property type="entry name" value="SMALL RIBOSOMAL SUBUNIT PROTEIN BS6M"/>
    <property type="match status" value="1"/>
</dbReference>
<dbReference type="Pfam" id="PF01250">
    <property type="entry name" value="Ribosomal_S6"/>
    <property type="match status" value="1"/>
</dbReference>
<dbReference type="SUPFAM" id="SSF54995">
    <property type="entry name" value="Ribosomal protein S6"/>
    <property type="match status" value="1"/>
</dbReference>
<dbReference type="PROSITE" id="PS01048">
    <property type="entry name" value="RIBOSOMAL_S6"/>
    <property type="match status" value="1"/>
</dbReference>
<proteinExistence type="inferred from homology"/>
<name>RS6_ECOLC</name>
<comment type="function">
    <text evidence="1">Binds together with bS18 to 16S ribosomal RNA.</text>
</comment>
<comment type="similarity">
    <text evidence="1">Belongs to the bacterial ribosomal protein bS6 family.</text>
</comment>
<organism>
    <name type="scientific">Escherichia coli (strain ATCC 8739 / DSM 1576 / NBRC 3972 / NCIMB 8545 / WDCM 00012 / Crooks)</name>
    <dbReference type="NCBI Taxonomy" id="481805"/>
    <lineage>
        <taxon>Bacteria</taxon>
        <taxon>Pseudomonadati</taxon>
        <taxon>Pseudomonadota</taxon>
        <taxon>Gammaproteobacteria</taxon>
        <taxon>Enterobacterales</taxon>
        <taxon>Enterobacteriaceae</taxon>
        <taxon>Escherichia</taxon>
    </lineage>
</organism>
<feature type="chain" id="PRO_1000079444" description="Small ribosomal subunit protein bS6">
    <location>
        <begin position="1"/>
        <end position="131"/>
    </location>
</feature>
<feature type="region of interest" description="Disordered" evidence="2">
    <location>
        <begin position="98"/>
        <end position="131"/>
    </location>
</feature>
<feature type="compositionally biased region" description="Basic and acidic residues" evidence="2">
    <location>
        <begin position="104"/>
        <end position="116"/>
    </location>
</feature>
<feature type="compositionally biased region" description="Acidic residues" evidence="2">
    <location>
        <begin position="120"/>
        <end position="131"/>
    </location>
</feature>
<feature type="modified residue" description="N6-acetyllysine" evidence="1">
    <location>
        <position position="93"/>
    </location>
</feature>
<sequence length="131" mass="15187">MRHYEIVFMVHPDQSEQVPGMIERYTAAITGAEGKIHRLEDWGRRQLAYPINKLHKAHYVLMNVEAPQEVIDELETTFRFNDAVIRSMVMRTKHAVTEASPMVKAKDERRERRDDFANETADDAEAGDSEE</sequence>
<accession>B1IT06</accession>
<reference key="1">
    <citation type="submission" date="2008-02" db="EMBL/GenBank/DDBJ databases">
        <title>Complete sequence of Escherichia coli C str. ATCC 8739.</title>
        <authorList>
            <person name="Copeland A."/>
            <person name="Lucas S."/>
            <person name="Lapidus A."/>
            <person name="Glavina del Rio T."/>
            <person name="Dalin E."/>
            <person name="Tice H."/>
            <person name="Bruce D."/>
            <person name="Goodwin L."/>
            <person name="Pitluck S."/>
            <person name="Kiss H."/>
            <person name="Brettin T."/>
            <person name="Detter J.C."/>
            <person name="Han C."/>
            <person name="Kuske C.R."/>
            <person name="Schmutz J."/>
            <person name="Larimer F."/>
            <person name="Land M."/>
            <person name="Hauser L."/>
            <person name="Kyrpides N."/>
            <person name="Mikhailova N."/>
            <person name="Ingram L."/>
            <person name="Richardson P."/>
        </authorList>
    </citation>
    <scope>NUCLEOTIDE SEQUENCE [LARGE SCALE GENOMIC DNA]</scope>
    <source>
        <strain>ATCC 8739 / DSM 1576 / NBRC 3972 / NCIMB 8545 / WDCM 00012 / Crooks</strain>
    </source>
</reference>
<gene>
    <name evidence="1" type="primary">rpsF</name>
    <name type="ordered locus">EcolC_3813</name>
</gene>
<protein>
    <recommendedName>
        <fullName evidence="1">Small ribosomal subunit protein bS6</fullName>
    </recommendedName>
    <alternativeName>
        <fullName evidence="3">30S ribosomal protein S6</fullName>
    </alternativeName>
</protein>